<comment type="similarity">
    <text evidence="2">Belongs to the protein-tyrosine phosphatase family.</text>
</comment>
<comment type="caution">
    <text evidence="2">A severely degenerate catalytic domain combined with missing promoter elements strongly suggest that PTPD1 is a pseudogene.</text>
</comment>
<keyword id="KW-1185">Reference proteome</keyword>
<protein>
    <recommendedName>
        <fullName>Truncated tyrosine phosphatase D1</fullName>
        <shortName>PTP-D1</shortName>
    </recommendedName>
</protein>
<name>PTPD1_MDBVW</name>
<gene>
    <name type="primary">D1</name>
</gene>
<evidence type="ECO:0000255" key="1">
    <source>
        <dbReference type="PROSITE-ProRule" id="PRU00160"/>
    </source>
</evidence>
<evidence type="ECO:0000305" key="2"/>
<sequence>MRRPNCIAEILRQHTQIIEESNNYYYLKMKTKDNKSQGPLRSLLCLPKNVNQKTDSAFCSVDGYNVKNKFLCTRSPNQDSLYQFWSMAYKKNIHIIVMLSPIDNLMRHRYWSLEEDEVFECREFRIRLRSSAQWIQFLKK</sequence>
<reference key="1">
    <citation type="journal article" date="2006" name="Virology">
        <title>Polydnavirus genomes reflect their dual roles as mutualists and pathogens.</title>
        <authorList>
            <person name="Webb B.A."/>
            <person name="Strand M.R."/>
            <person name="Dickey S.E."/>
            <person name="Beck M.H."/>
            <person name="Hilgarth R.S."/>
            <person name="Barney W.E."/>
            <person name="Kadash K."/>
            <person name="Kroemer J.A."/>
            <person name="Lindstrom K.G."/>
            <person name="Rattanadechakul W."/>
            <person name="Shelby K.S."/>
            <person name="Thoetkiattikul H."/>
            <person name="Turnbull M.W."/>
            <person name="Witherell R.A."/>
        </authorList>
    </citation>
    <scope>NUCLEOTIDE SEQUENCE [GENOMIC DNA]</scope>
</reference>
<organism>
    <name type="scientific">Microplitis demolitor bracovirus (isolate Webb)</name>
    <name type="common">MdBV</name>
    <dbReference type="NCBI Taxonomy" id="654919"/>
    <lineage>
        <taxon>Viruses</taxon>
        <taxon>Viruses incertae sedis</taxon>
        <taxon>Polydnaviriformidae</taxon>
        <taxon>Bracoviriform</taxon>
        <taxon>Microplitis demolitor bracovirus</taxon>
    </lineage>
</organism>
<accession>Q5I154</accession>
<dbReference type="EMBL" id="AY875683">
    <property type="protein sequence ID" value="AAW51780.1"/>
    <property type="molecule type" value="Genomic_DNA"/>
</dbReference>
<dbReference type="RefSeq" id="YP_239374.1">
    <property type="nucleotide sequence ID" value="NC_007033.1"/>
</dbReference>
<dbReference type="SMR" id="Q5I154"/>
<dbReference type="KEGG" id="vg:5075809"/>
<dbReference type="Proteomes" id="UP000008168">
    <property type="component" value="Genome"/>
</dbReference>
<dbReference type="GO" id="GO:0004725">
    <property type="term" value="F:protein tyrosine phosphatase activity"/>
    <property type="evidence" value="ECO:0007669"/>
    <property type="project" value="InterPro"/>
</dbReference>
<dbReference type="Gene3D" id="3.90.190.10">
    <property type="entry name" value="Protein tyrosine phosphatase superfamily"/>
    <property type="match status" value="1"/>
</dbReference>
<dbReference type="InterPro" id="IPR029021">
    <property type="entry name" value="Prot-tyrosine_phosphatase-like"/>
</dbReference>
<dbReference type="InterPro" id="IPR000242">
    <property type="entry name" value="PTP_cat"/>
</dbReference>
<dbReference type="Pfam" id="PF00102">
    <property type="entry name" value="Y_phosphatase"/>
    <property type="match status" value="1"/>
</dbReference>
<dbReference type="SUPFAM" id="SSF52799">
    <property type="entry name" value="(Phosphotyrosine protein) phosphatases II"/>
    <property type="match status" value="1"/>
</dbReference>
<dbReference type="PROSITE" id="PS50055">
    <property type="entry name" value="TYR_PHOSPHATASE_PTP"/>
    <property type="match status" value="1"/>
</dbReference>
<proteinExistence type="inferred from homology"/>
<organismHost>
    <name type="scientific">Microplitis demolitor</name>
    <name type="common">Parasitoid wasp</name>
    <dbReference type="NCBI Taxonomy" id="69319"/>
</organismHost>
<feature type="chain" id="PRO_0000405375" description="Truncated tyrosine phosphatase D1">
    <location>
        <begin position="1"/>
        <end position="140"/>
    </location>
</feature>
<feature type="domain" description="Tyrosine-protein phosphatase" evidence="1">
    <location>
        <begin position="1"/>
        <end position="140"/>
    </location>
</feature>